<keyword id="KW-0325">Glycoprotein</keyword>
<keyword id="KW-0328">Glycosyltransferase</keyword>
<keyword id="KW-0472">Membrane</keyword>
<keyword id="KW-1267">Proteomics identification</keyword>
<keyword id="KW-1185">Reference proteome</keyword>
<keyword id="KW-0735">Signal-anchor</keyword>
<keyword id="KW-0808">Transferase</keyword>
<keyword id="KW-0812">Transmembrane</keyword>
<keyword id="KW-1133">Transmembrane helix</keyword>
<organism>
    <name type="scientific">Homo sapiens</name>
    <name type="common">Human</name>
    <dbReference type="NCBI Taxonomy" id="9606"/>
    <lineage>
        <taxon>Eukaryota</taxon>
        <taxon>Metazoa</taxon>
        <taxon>Chordata</taxon>
        <taxon>Craniata</taxon>
        <taxon>Vertebrata</taxon>
        <taxon>Euteleostomi</taxon>
        <taxon>Mammalia</taxon>
        <taxon>Eutheria</taxon>
        <taxon>Euarchontoglires</taxon>
        <taxon>Primates</taxon>
        <taxon>Haplorrhini</taxon>
        <taxon>Catarrhini</taxon>
        <taxon>Hominidae</taxon>
        <taxon>Homo</taxon>
    </lineage>
</organism>
<reference key="1">
    <citation type="submission" date="2000-01" db="EMBL/GenBank/DDBJ databases">
        <title>Gala4a, glycosyltransferase.</title>
        <authorList>
            <person name="Steffensen R."/>
            <person name="Bennett E.P."/>
        </authorList>
    </citation>
    <scope>NUCLEOTIDE SEQUENCE [MRNA]</scope>
</reference>
<reference key="2">
    <citation type="journal article" date="2003" name="Genome Res.">
        <title>The secreted protein discovery initiative (SPDI), a large-scale effort to identify novel human secreted and transmembrane proteins: a bioinformatics assessment.</title>
        <authorList>
            <person name="Clark H.F."/>
            <person name="Gurney A.L."/>
            <person name="Abaya E."/>
            <person name="Baker K."/>
            <person name="Baldwin D.T."/>
            <person name="Brush J."/>
            <person name="Chen J."/>
            <person name="Chow B."/>
            <person name="Chui C."/>
            <person name="Crowley C."/>
            <person name="Currell B."/>
            <person name="Deuel B."/>
            <person name="Dowd P."/>
            <person name="Eaton D."/>
            <person name="Foster J.S."/>
            <person name="Grimaldi C."/>
            <person name="Gu Q."/>
            <person name="Hass P.E."/>
            <person name="Heldens S."/>
            <person name="Huang A."/>
            <person name="Kim H.S."/>
            <person name="Klimowski L."/>
            <person name="Jin Y."/>
            <person name="Johnson S."/>
            <person name="Lee J."/>
            <person name="Lewis L."/>
            <person name="Liao D."/>
            <person name="Mark M.R."/>
            <person name="Robbie E."/>
            <person name="Sanchez C."/>
            <person name="Schoenfeld J."/>
            <person name="Seshagiri S."/>
            <person name="Simmons L."/>
            <person name="Singh J."/>
            <person name="Smith V."/>
            <person name="Stinson J."/>
            <person name="Vagts A."/>
            <person name="Vandlen R.L."/>
            <person name="Watanabe C."/>
            <person name="Wieand D."/>
            <person name="Woods K."/>
            <person name="Xie M.-H."/>
            <person name="Yansura D.G."/>
            <person name="Yi S."/>
            <person name="Yu G."/>
            <person name="Yuan J."/>
            <person name="Zhang M."/>
            <person name="Zhang Z."/>
            <person name="Goddard A.D."/>
            <person name="Wood W.I."/>
            <person name="Godowski P.J."/>
            <person name="Gray A.M."/>
        </authorList>
    </citation>
    <scope>NUCLEOTIDE SEQUENCE [LARGE SCALE MRNA]</scope>
</reference>
<reference key="3">
    <citation type="journal article" date="2004" name="Nat. Genet.">
        <title>Complete sequencing and characterization of 21,243 full-length human cDNAs.</title>
        <authorList>
            <person name="Ota T."/>
            <person name="Suzuki Y."/>
            <person name="Nishikawa T."/>
            <person name="Otsuki T."/>
            <person name="Sugiyama T."/>
            <person name="Irie R."/>
            <person name="Wakamatsu A."/>
            <person name="Hayashi K."/>
            <person name="Sato H."/>
            <person name="Nagai K."/>
            <person name="Kimura K."/>
            <person name="Makita H."/>
            <person name="Sekine M."/>
            <person name="Obayashi M."/>
            <person name="Nishi T."/>
            <person name="Shibahara T."/>
            <person name="Tanaka T."/>
            <person name="Ishii S."/>
            <person name="Yamamoto J."/>
            <person name="Saito K."/>
            <person name="Kawai Y."/>
            <person name="Isono Y."/>
            <person name="Nakamura Y."/>
            <person name="Nagahari K."/>
            <person name="Murakami K."/>
            <person name="Yasuda T."/>
            <person name="Iwayanagi T."/>
            <person name="Wagatsuma M."/>
            <person name="Shiratori A."/>
            <person name="Sudo H."/>
            <person name="Hosoiri T."/>
            <person name="Kaku Y."/>
            <person name="Kodaira H."/>
            <person name="Kondo H."/>
            <person name="Sugawara M."/>
            <person name="Takahashi M."/>
            <person name="Kanda K."/>
            <person name="Yokoi T."/>
            <person name="Furuya T."/>
            <person name="Kikkawa E."/>
            <person name="Omura Y."/>
            <person name="Abe K."/>
            <person name="Kamihara K."/>
            <person name="Katsuta N."/>
            <person name="Sato K."/>
            <person name="Tanikawa M."/>
            <person name="Yamazaki M."/>
            <person name="Ninomiya K."/>
            <person name="Ishibashi T."/>
            <person name="Yamashita H."/>
            <person name="Murakawa K."/>
            <person name="Fujimori K."/>
            <person name="Tanai H."/>
            <person name="Kimata M."/>
            <person name="Watanabe M."/>
            <person name="Hiraoka S."/>
            <person name="Chiba Y."/>
            <person name="Ishida S."/>
            <person name="Ono Y."/>
            <person name="Takiguchi S."/>
            <person name="Watanabe S."/>
            <person name="Yosida M."/>
            <person name="Hotuta T."/>
            <person name="Kusano J."/>
            <person name="Kanehori K."/>
            <person name="Takahashi-Fujii A."/>
            <person name="Hara H."/>
            <person name="Tanase T.-O."/>
            <person name="Nomura Y."/>
            <person name="Togiya S."/>
            <person name="Komai F."/>
            <person name="Hara R."/>
            <person name="Takeuchi K."/>
            <person name="Arita M."/>
            <person name="Imose N."/>
            <person name="Musashino K."/>
            <person name="Yuuki H."/>
            <person name="Oshima A."/>
            <person name="Sasaki N."/>
            <person name="Aotsuka S."/>
            <person name="Yoshikawa Y."/>
            <person name="Matsunawa H."/>
            <person name="Ichihara T."/>
            <person name="Shiohata N."/>
            <person name="Sano S."/>
            <person name="Moriya S."/>
            <person name="Momiyama H."/>
            <person name="Satoh N."/>
            <person name="Takami S."/>
            <person name="Terashima Y."/>
            <person name="Suzuki O."/>
            <person name="Nakagawa S."/>
            <person name="Senoh A."/>
            <person name="Mizoguchi H."/>
            <person name="Goto Y."/>
            <person name="Shimizu F."/>
            <person name="Wakebe H."/>
            <person name="Hishigaki H."/>
            <person name="Watanabe T."/>
            <person name="Sugiyama A."/>
            <person name="Takemoto M."/>
            <person name="Kawakami B."/>
            <person name="Yamazaki M."/>
            <person name="Watanabe K."/>
            <person name="Kumagai A."/>
            <person name="Itakura S."/>
            <person name="Fukuzumi Y."/>
            <person name="Fujimori Y."/>
            <person name="Komiyama M."/>
            <person name="Tashiro H."/>
            <person name="Tanigami A."/>
            <person name="Fujiwara T."/>
            <person name="Ono T."/>
            <person name="Yamada K."/>
            <person name="Fujii Y."/>
            <person name="Ozaki K."/>
            <person name="Hirao M."/>
            <person name="Ohmori Y."/>
            <person name="Kawabata A."/>
            <person name="Hikiji T."/>
            <person name="Kobatake N."/>
            <person name="Inagaki H."/>
            <person name="Ikema Y."/>
            <person name="Okamoto S."/>
            <person name="Okitani R."/>
            <person name="Kawakami T."/>
            <person name="Noguchi S."/>
            <person name="Itoh T."/>
            <person name="Shigeta K."/>
            <person name="Senba T."/>
            <person name="Matsumura K."/>
            <person name="Nakajima Y."/>
            <person name="Mizuno T."/>
            <person name="Morinaga M."/>
            <person name="Sasaki M."/>
            <person name="Togashi T."/>
            <person name="Oyama M."/>
            <person name="Hata H."/>
            <person name="Watanabe M."/>
            <person name="Komatsu T."/>
            <person name="Mizushima-Sugano J."/>
            <person name="Satoh T."/>
            <person name="Shirai Y."/>
            <person name="Takahashi Y."/>
            <person name="Nakagawa K."/>
            <person name="Okumura K."/>
            <person name="Nagase T."/>
            <person name="Nomura N."/>
            <person name="Kikuchi H."/>
            <person name="Masuho Y."/>
            <person name="Yamashita R."/>
            <person name="Nakai K."/>
            <person name="Yada T."/>
            <person name="Nakamura Y."/>
            <person name="Ohara O."/>
            <person name="Isogai T."/>
            <person name="Sugano S."/>
        </authorList>
    </citation>
    <scope>NUCLEOTIDE SEQUENCE [LARGE SCALE MRNA]</scope>
    <scope>VARIANT THR-37</scope>
</reference>
<reference key="4">
    <citation type="journal article" date="2004" name="Genome Res.">
        <title>The status, quality, and expansion of the NIH full-length cDNA project: the Mammalian Gene Collection (MGC).</title>
        <authorList>
            <consortium name="The MGC Project Team"/>
        </authorList>
    </citation>
    <scope>NUCLEOTIDE SEQUENCE [LARGE SCALE MRNA]</scope>
    <source>
        <tissue>Prostate</tissue>
    </source>
</reference>
<protein>
    <recommendedName>
        <fullName>Glycosyltransferase 8 domain-containing protein 2</fullName>
        <ecNumber>2.4.1.-</ecNumber>
    </recommendedName>
</protein>
<accession>Q9H1C3</accession>
<accession>Q96KA2</accession>
<gene>
    <name type="primary">GLT8D2</name>
    <name type="synonym">GALA4A</name>
    <name type="ORF">UNQ1901/PRO4347</name>
</gene>
<proteinExistence type="evidence at protein level"/>
<comment type="subcellular location">
    <subcellularLocation>
        <location evidence="3">Membrane</location>
        <topology evidence="3">Single-pass type II membrane protein</topology>
    </subcellularLocation>
</comment>
<comment type="similarity">
    <text evidence="3">Belongs to the glycosyltransferase 8 family.</text>
</comment>
<evidence type="ECO:0000255" key="1"/>
<evidence type="ECO:0000269" key="2">
    <source>
    </source>
</evidence>
<evidence type="ECO:0000305" key="3"/>
<name>GL8D2_HUMAN</name>
<sequence length="349" mass="40026">MALLRKINQVLLFLLIVTLCVILYKKVHKGTVPKNDADDESETPEELEEEIPVVICAAAGRMGATMAAINSIYSNTDANILFYVVGLRNTLTRIRKWIEHSKLREINFKIVEFNPMVLKGKIRPDSSRPELLQPLNFVRFYLPLLIHQHEKVIYLDDDVIVQGDIQELYDTTLALGHAAAFSDDCDLPSAQDINRLVGLQNTYMGYLDYRKKAIKDLGISPSTCSFNPGVIVANMTEWKHQRITKQLEKWMQKNVEENLYSSSLGGGVATSPMLIVFHGKYSTINPLWHIRHLGWNPDARYSEHFLQEAKLLHWNGRHKPWDFPSVHNDLWESWFVPDPAGIFKLNHHS</sequence>
<feature type="chain" id="PRO_0000271382" description="Glycosyltransferase 8 domain-containing protein 2">
    <location>
        <begin position="1"/>
        <end position="349"/>
    </location>
</feature>
<feature type="topological domain" description="Cytoplasmic" evidence="1">
    <location>
        <begin position="1"/>
        <end position="6"/>
    </location>
</feature>
<feature type="transmembrane region" description="Helical; Signal-anchor for type II membrane protein" evidence="1">
    <location>
        <begin position="7"/>
        <end position="24"/>
    </location>
</feature>
<feature type="topological domain" description="Lumenal" evidence="1">
    <location>
        <begin position="25"/>
        <end position="349"/>
    </location>
</feature>
<feature type="glycosylation site" description="N-linked (GlcNAc...) asparagine" evidence="1">
    <location>
        <position position="234"/>
    </location>
</feature>
<feature type="sequence variant" id="VAR_049247" description="In dbSNP:rs17035120." evidence="2">
    <original>A</original>
    <variation>T</variation>
    <location>
        <position position="37"/>
    </location>
</feature>
<feature type="sequence conflict" description="In Ref. 3; BAB55033." evidence="3" ref="3">
    <original>I</original>
    <variation>F</variation>
    <location>
        <position position="72"/>
    </location>
</feature>
<feature type="sequence conflict" description="In Ref. 3; BAB55033." evidence="3" ref="3">
    <original>N</original>
    <variation>D</variation>
    <location>
        <position position="227"/>
    </location>
</feature>
<dbReference type="EC" id="2.4.1.-"/>
<dbReference type="EMBL" id="AJ271711">
    <property type="protein sequence ID" value="CAC19667.1"/>
    <property type="molecule type" value="mRNA"/>
</dbReference>
<dbReference type="EMBL" id="AY358763">
    <property type="protein sequence ID" value="AAQ89123.1"/>
    <property type="molecule type" value="mRNA"/>
</dbReference>
<dbReference type="EMBL" id="AK027310">
    <property type="protein sequence ID" value="BAB55033.1"/>
    <property type="molecule type" value="mRNA"/>
</dbReference>
<dbReference type="EMBL" id="AK056056">
    <property type="protein sequence ID" value="BAB71085.1"/>
    <property type="molecule type" value="mRNA"/>
</dbReference>
<dbReference type="EMBL" id="BC022343">
    <property type="protein sequence ID" value="AAH22343.1"/>
    <property type="molecule type" value="mRNA"/>
</dbReference>
<dbReference type="CCDS" id="CCDS9096.1"/>
<dbReference type="RefSeq" id="NP_001303896.1">
    <property type="nucleotide sequence ID" value="NM_001316967.2"/>
</dbReference>
<dbReference type="RefSeq" id="NP_001371640.1">
    <property type="nucleotide sequence ID" value="NM_001384711.1"/>
</dbReference>
<dbReference type="RefSeq" id="NP_001371642.1">
    <property type="nucleotide sequence ID" value="NM_001384713.1"/>
</dbReference>
<dbReference type="RefSeq" id="NP_001371644.1">
    <property type="nucleotide sequence ID" value="NM_001384715.1"/>
</dbReference>
<dbReference type="RefSeq" id="NP_001371645.1">
    <property type="nucleotide sequence ID" value="NM_001384716.1"/>
</dbReference>
<dbReference type="RefSeq" id="NP_001371646.1">
    <property type="nucleotide sequence ID" value="NM_001384717.1"/>
</dbReference>
<dbReference type="RefSeq" id="NP_001371647.1">
    <property type="nucleotide sequence ID" value="NM_001384718.1"/>
</dbReference>
<dbReference type="RefSeq" id="NP_001371648.1">
    <property type="nucleotide sequence ID" value="NM_001384719.1"/>
</dbReference>
<dbReference type="RefSeq" id="NP_001371649.1">
    <property type="nucleotide sequence ID" value="NM_001384720.1"/>
</dbReference>
<dbReference type="RefSeq" id="NP_001371650.1">
    <property type="nucleotide sequence ID" value="NM_001384721.1"/>
</dbReference>
<dbReference type="RefSeq" id="NP_001371651.1">
    <property type="nucleotide sequence ID" value="NM_001384722.1"/>
</dbReference>
<dbReference type="RefSeq" id="NP_112592.1">
    <property type="nucleotide sequence ID" value="NM_031302.5"/>
</dbReference>
<dbReference type="RefSeq" id="XP_011537095.1">
    <property type="nucleotide sequence ID" value="XM_011538793.2"/>
</dbReference>
<dbReference type="RefSeq" id="XP_016875488.1">
    <property type="nucleotide sequence ID" value="XM_017019999.2"/>
</dbReference>
<dbReference type="RefSeq" id="XP_047285585.1">
    <property type="nucleotide sequence ID" value="XM_047429629.1"/>
</dbReference>
<dbReference type="RefSeq" id="XP_047285586.1">
    <property type="nucleotide sequence ID" value="XM_047429630.1"/>
</dbReference>
<dbReference type="RefSeq" id="XP_047285587.1">
    <property type="nucleotide sequence ID" value="XM_047429631.1"/>
</dbReference>
<dbReference type="RefSeq" id="XP_047285588.1">
    <property type="nucleotide sequence ID" value="XM_047429632.1"/>
</dbReference>
<dbReference type="RefSeq" id="XP_054229355.1">
    <property type="nucleotide sequence ID" value="XM_054373380.1"/>
</dbReference>
<dbReference type="RefSeq" id="XP_054229356.1">
    <property type="nucleotide sequence ID" value="XM_054373381.1"/>
</dbReference>
<dbReference type="RefSeq" id="XP_054229357.1">
    <property type="nucleotide sequence ID" value="XM_054373382.1"/>
</dbReference>
<dbReference type="RefSeq" id="XP_054229358.1">
    <property type="nucleotide sequence ID" value="XM_054373383.1"/>
</dbReference>
<dbReference type="RefSeq" id="XP_054229359.1">
    <property type="nucleotide sequence ID" value="XM_054373384.1"/>
</dbReference>
<dbReference type="SMR" id="Q9H1C3"/>
<dbReference type="BioGRID" id="123660">
    <property type="interactions" value="31"/>
</dbReference>
<dbReference type="FunCoup" id="Q9H1C3">
    <property type="interactions" value="314"/>
</dbReference>
<dbReference type="IntAct" id="Q9H1C3">
    <property type="interactions" value="18"/>
</dbReference>
<dbReference type="STRING" id="9606.ENSP00000354053"/>
<dbReference type="CAZy" id="GT8">
    <property type="family name" value="Glycosyltransferase Family 8"/>
</dbReference>
<dbReference type="GlyCosmos" id="Q9H1C3">
    <property type="glycosylation" value="1 site, No reported glycans"/>
</dbReference>
<dbReference type="GlyGen" id="Q9H1C3">
    <property type="glycosylation" value="1 site"/>
</dbReference>
<dbReference type="iPTMnet" id="Q9H1C3"/>
<dbReference type="PhosphoSitePlus" id="Q9H1C3"/>
<dbReference type="BioMuta" id="GLT8D2"/>
<dbReference type="DMDM" id="74733535"/>
<dbReference type="jPOST" id="Q9H1C3"/>
<dbReference type="MassIVE" id="Q9H1C3"/>
<dbReference type="PaxDb" id="9606-ENSP00000354053"/>
<dbReference type="PeptideAtlas" id="Q9H1C3"/>
<dbReference type="ProteomicsDB" id="80397"/>
<dbReference type="Pumba" id="Q9H1C3"/>
<dbReference type="Antibodypedia" id="18134">
    <property type="antibodies" value="138 antibodies from 18 providers"/>
</dbReference>
<dbReference type="DNASU" id="83468"/>
<dbReference type="Ensembl" id="ENST00000360814.9">
    <property type="protein sequence ID" value="ENSP00000354053.4"/>
    <property type="gene ID" value="ENSG00000120820.13"/>
</dbReference>
<dbReference type="Ensembl" id="ENST00000546436.5">
    <property type="protein sequence ID" value="ENSP00000449750.1"/>
    <property type="gene ID" value="ENSG00000120820.13"/>
</dbReference>
<dbReference type="Ensembl" id="ENST00000548660.5">
    <property type="protein sequence ID" value="ENSP00000447450.1"/>
    <property type="gene ID" value="ENSG00000120820.13"/>
</dbReference>
<dbReference type="GeneID" id="83468"/>
<dbReference type="KEGG" id="hsa:83468"/>
<dbReference type="MANE-Select" id="ENST00000360814.9">
    <property type="protein sequence ID" value="ENSP00000354053.4"/>
    <property type="RefSeq nucleotide sequence ID" value="NM_001384711.1"/>
    <property type="RefSeq protein sequence ID" value="NP_001371640.1"/>
</dbReference>
<dbReference type="UCSC" id="uc001tkh.2">
    <property type="organism name" value="human"/>
</dbReference>
<dbReference type="AGR" id="HGNC:24890"/>
<dbReference type="CTD" id="83468"/>
<dbReference type="DisGeNET" id="83468"/>
<dbReference type="GeneCards" id="GLT8D2"/>
<dbReference type="HGNC" id="HGNC:24890">
    <property type="gene designation" value="GLT8D2"/>
</dbReference>
<dbReference type="HPA" id="ENSG00000120820">
    <property type="expression patterns" value="Tissue enhanced (ovary)"/>
</dbReference>
<dbReference type="neXtProt" id="NX_Q9H1C3"/>
<dbReference type="OpenTargets" id="ENSG00000120820"/>
<dbReference type="PharmGKB" id="PA134939919"/>
<dbReference type="VEuPathDB" id="HostDB:ENSG00000120820"/>
<dbReference type="eggNOG" id="ENOG502QTN8">
    <property type="taxonomic scope" value="Eukaryota"/>
</dbReference>
<dbReference type="GeneTree" id="ENSGT00940000158078"/>
<dbReference type="HOGENOM" id="CLU_010770_0_0_1"/>
<dbReference type="InParanoid" id="Q9H1C3"/>
<dbReference type="OMA" id="STINPMW"/>
<dbReference type="OrthoDB" id="411524at2759"/>
<dbReference type="PAN-GO" id="Q9H1C3">
    <property type="GO annotations" value="1 GO annotation based on evolutionary models"/>
</dbReference>
<dbReference type="PhylomeDB" id="Q9H1C3"/>
<dbReference type="TreeFam" id="TF332433"/>
<dbReference type="PathwayCommons" id="Q9H1C3"/>
<dbReference type="SignaLink" id="Q9H1C3"/>
<dbReference type="BioGRID-ORCS" id="83468">
    <property type="hits" value="10 hits in 1144 CRISPR screens"/>
</dbReference>
<dbReference type="ChiTaRS" id="GLT8D2">
    <property type="organism name" value="human"/>
</dbReference>
<dbReference type="GenomeRNAi" id="83468"/>
<dbReference type="Pharos" id="Q9H1C3">
    <property type="development level" value="Tbio"/>
</dbReference>
<dbReference type="PRO" id="PR:Q9H1C3"/>
<dbReference type="Proteomes" id="UP000005640">
    <property type="component" value="Chromosome 12"/>
</dbReference>
<dbReference type="RNAct" id="Q9H1C3">
    <property type="molecule type" value="protein"/>
</dbReference>
<dbReference type="Bgee" id="ENSG00000120820">
    <property type="expression patterns" value="Expressed in tibia and 188 other cell types or tissues"/>
</dbReference>
<dbReference type="ExpressionAtlas" id="Q9H1C3">
    <property type="expression patterns" value="baseline and differential"/>
</dbReference>
<dbReference type="GO" id="GO:0005794">
    <property type="term" value="C:Golgi apparatus"/>
    <property type="evidence" value="ECO:0000318"/>
    <property type="project" value="GO_Central"/>
</dbReference>
<dbReference type="GO" id="GO:0016020">
    <property type="term" value="C:membrane"/>
    <property type="evidence" value="ECO:0007669"/>
    <property type="project" value="UniProtKB-SubCell"/>
</dbReference>
<dbReference type="GO" id="GO:0008194">
    <property type="term" value="F:UDP-glycosyltransferase activity"/>
    <property type="evidence" value="ECO:0007669"/>
    <property type="project" value="UniProtKB-ARBA"/>
</dbReference>
<dbReference type="FunFam" id="3.90.550.10:FF:000078">
    <property type="entry name" value="glycosyltransferase 8 domain-containing protein 2"/>
    <property type="match status" value="1"/>
</dbReference>
<dbReference type="Gene3D" id="3.90.550.10">
    <property type="entry name" value="Spore Coat Polysaccharide Biosynthesis Protein SpsA, Chain A"/>
    <property type="match status" value="1"/>
</dbReference>
<dbReference type="InterPro" id="IPR002495">
    <property type="entry name" value="Glyco_trans_8"/>
</dbReference>
<dbReference type="InterPro" id="IPR050748">
    <property type="entry name" value="Glycosyltrans_8_dom-fam"/>
</dbReference>
<dbReference type="InterPro" id="IPR029044">
    <property type="entry name" value="Nucleotide-diphossugar_trans"/>
</dbReference>
<dbReference type="PANTHER" id="PTHR13778">
    <property type="entry name" value="GLYCOSYLTRANSFERASE 8 DOMAIN-CONTAINING PROTEIN"/>
    <property type="match status" value="1"/>
</dbReference>
<dbReference type="PANTHER" id="PTHR13778:SF2">
    <property type="entry name" value="GLYCOSYLTRANSFERASE 8 DOMAIN-CONTAINING PROTEIN 2"/>
    <property type="match status" value="1"/>
</dbReference>
<dbReference type="Pfam" id="PF01501">
    <property type="entry name" value="Glyco_transf_8"/>
    <property type="match status" value="1"/>
</dbReference>
<dbReference type="SUPFAM" id="SSF53448">
    <property type="entry name" value="Nucleotide-diphospho-sugar transferases"/>
    <property type="match status" value="1"/>
</dbReference>